<organism>
    <name type="scientific">Moorella thermoacetica (strain ATCC 39073 / JCM 9320)</name>
    <dbReference type="NCBI Taxonomy" id="264732"/>
    <lineage>
        <taxon>Bacteria</taxon>
        <taxon>Bacillati</taxon>
        <taxon>Bacillota</taxon>
        <taxon>Clostridia</taxon>
        <taxon>Moorellales</taxon>
        <taxon>Moorellaceae</taxon>
        <taxon>Moorella</taxon>
    </lineage>
</organism>
<comment type="function">
    <text evidence="1">Involved in the maturation of [NiFe] hydrogenases. Required for nickel insertion into the metal center of the hydrogenase.</text>
</comment>
<comment type="similarity">
    <text evidence="1">Belongs to the HypA/HybF family.</text>
</comment>
<protein>
    <recommendedName>
        <fullName evidence="1">Hydrogenase maturation factor HypA</fullName>
    </recommendedName>
</protein>
<evidence type="ECO:0000255" key="1">
    <source>
        <dbReference type="HAMAP-Rule" id="MF_00213"/>
    </source>
</evidence>
<sequence length="113" mass="12841">MHELALTAELLRLLENNAREKGIKHIKRVKLVIGALSSVLPEAVEFSFNTLKEGPLFEDAKLEIEEKPVRIRCRDCMAEKAVDHFYPLCPSCGSGRVSIIEGKEFYIDFYEGE</sequence>
<proteinExistence type="inferred from homology"/>
<keyword id="KW-0479">Metal-binding</keyword>
<keyword id="KW-0533">Nickel</keyword>
<keyword id="KW-0862">Zinc</keyword>
<feature type="chain" id="PRO_1000023843" description="Hydrogenase maturation factor HypA">
    <location>
        <begin position="1"/>
        <end position="113"/>
    </location>
</feature>
<feature type="binding site" evidence="1">
    <location>
        <position position="2"/>
    </location>
    <ligand>
        <name>Ni(2+)</name>
        <dbReference type="ChEBI" id="CHEBI:49786"/>
    </ligand>
</feature>
<feature type="binding site" evidence="1">
    <location>
        <position position="73"/>
    </location>
    <ligand>
        <name>Zn(2+)</name>
        <dbReference type="ChEBI" id="CHEBI:29105"/>
    </ligand>
</feature>
<feature type="binding site" evidence="1">
    <location>
        <position position="76"/>
    </location>
    <ligand>
        <name>Zn(2+)</name>
        <dbReference type="ChEBI" id="CHEBI:29105"/>
    </ligand>
</feature>
<feature type="binding site" evidence="1">
    <location>
        <position position="89"/>
    </location>
    <ligand>
        <name>Zn(2+)</name>
        <dbReference type="ChEBI" id="CHEBI:29105"/>
    </ligand>
</feature>
<feature type="binding site" evidence="1">
    <location>
        <position position="92"/>
    </location>
    <ligand>
        <name>Zn(2+)</name>
        <dbReference type="ChEBI" id="CHEBI:29105"/>
    </ligand>
</feature>
<name>HYPA_MOOTA</name>
<gene>
    <name evidence="1" type="primary">hypA</name>
    <name type="ordered locus">Moth_2181</name>
</gene>
<accession>Q2RGG9</accession>
<reference key="1">
    <citation type="journal article" date="2008" name="Environ. Microbiol.">
        <title>The complete genome sequence of Moorella thermoacetica (f. Clostridium thermoaceticum).</title>
        <authorList>
            <person name="Pierce E."/>
            <person name="Xie G."/>
            <person name="Barabote R.D."/>
            <person name="Saunders E."/>
            <person name="Han C.S."/>
            <person name="Detter J.C."/>
            <person name="Richardson P."/>
            <person name="Brettin T.S."/>
            <person name="Das A."/>
            <person name="Ljungdahl L.G."/>
            <person name="Ragsdale S.W."/>
        </authorList>
    </citation>
    <scope>NUCLEOTIDE SEQUENCE [LARGE SCALE GENOMIC DNA]</scope>
    <source>
        <strain>ATCC 39073 / JCM 9320</strain>
    </source>
</reference>
<dbReference type="EMBL" id="CP000232">
    <property type="protein sequence ID" value="ABC20470.1"/>
    <property type="molecule type" value="Genomic_DNA"/>
</dbReference>
<dbReference type="RefSeq" id="YP_431013.1">
    <property type="nucleotide sequence ID" value="NC_007644.1"/>
</dbReference>
<dbReference type="SMR" id="Q2RGG9"/>
<dbReference type="STRING" id="264732.Moth_2181"/>
<dbReference type="EnsemblBacteria" id="ABC20470">
    <property type="protein sequence ID" value="ABC20470"/>
    <property type="gene ID" value="Moth_2181"/>
</dbReference>
<dbReference type="KEGG" id="mta:Moth_2181"/>
<dbReference type="PATRIC" id="fig|264732.11.peg.2375"/>
<dbReference type="eggNOG" id="COG0375">
    <property type="taxonomic scope" value="Bacteria"/>
</dbReference>
<dbReference type="HOGENOM" id="CLU_126929_6_0_9"/>
<dbReference type="OrthoDB" id="9800361at2"/>
<dbReference type="GO" id="GO:0016151">
    <property type="term" value="F:nickel cation binding"/>
    <property type="evidence" value="ECO:0007669"/>
    <property type="project" value="UniProtKB-UniRule"/>
</dbReference>
<dbReference type="GO" id="GO:0008270">
    <property type="term" value="F:zinc ion binding"/>
    <property type="evidence" value="ECO:0007669"/>
    <property type="project" value="UniProtKB-UniRule"/>
</dbReference>
<dbReference type="GO" id="GO:0051604">
    <property type="term" value="P:protein maturation"/>
    <property type="evidence" value="ECO:0007669"/>
    <property type="project" value="InterPro"/>
</dbReference>
<dbReference type="GO" id="GO:0036211">
    <property type="term" value="P:protein modification process"/>
    <property type="evidence" value="ECO:0007669"/>
    <property type="project" value="UniProtKB-UniRule"/>
</dbReference>
<dbReference type="Gene3D" id="3.30.2320.80">
    <property type="match status" value="1"/>
</dbReference>
<dbReference type="HAMAP" id="MF_00213">
    <property type="entry name" value="HypA_HybF"/>
    <property type="match status" value="1"/>
</dbReference>
<dbReference type="InterPro" id="IPR000688">
    <property type="entry name" value="HypA/HybF"/>
</dbReference>
<dbReference type="NCBIfam" id="TIGR00100">
    <property type="entry name" value="hypA"/>
    <property type="match status" value="1"/>
</dbReference>
<dbReference type="PANTHER" id="PTHR34535">
    <property type="entry name" value="HYDROGENASE MATURATION FACTOR HYPA"/>
    <property type="match status" value="1"/>
</dbReference>
<dbReference type="PANTHER" id="PTHR34535:SF3">
    <property type="entry name" value="HYDROGENASE MATURATION FACTOR HYPA"/>
    <property type="match status" value="1"/>
</dbReference>
<dbReference type="Pfam" id="PF01155">
    <property type="entry name" value="HypA"/>
    <property type="match status" value="1"/>
</dbReference>
<dbReference type="PIRSF" id="PIRSF004761">
    <property type="entry name" value="Hydrgn_mat_HypA"/>
    <property type="match status" value="1"/>
</dbReference>